<organism>
    <name type="scientific">Saccharolobus islandicus (strain M.16.4 / Kamchatka #3)</name>
    <name type="common">Sulfolobus islandicus</name>
    <dbReference type="NCBI Taxonomy" id="426118"/>
    <lineage>
        <taxon>Archaea</taxon>
        <taxon>Thermoproteota</taxon>
        <taxon>Thermoprotei</taxon>
        <taxon>Sulfolobales</taxon>
        <taxon>Sulfolobaceae</taxon>
        <taxon>Saccharolobus</taxon>
    </lineage>
</organism>
<evidence type="ECO:0000255" key="1">
    <source>
        <dbReference type="HAMAP-Rule" id="MF_00645"/>
    </source>
</evidence>
<feature type="chain" id="PRO_1000212380" description="Protein M164_1949">
    <location>
        <begin position="1"/>
        <end position="227"/>
    </location>
</feature>
<feature type="domain" description="AMMECR1" evidence="1">
    <location>
        <begin position="15"/>
        <end position="209"/>
    </location>
</feature>
<dbReference type="EMBL" id="CP001402">
    <property type="protein sequence ID" value="ACR42552.1"/>
    <property type="molecule type" value="Genomic_DNA"/>
</dbReference>
<dbReference type="SMR" id="C4KIY8"/>
<dbReference type="KEGG" id="sid:M164_1949"/>
<dbReference type="HOGENOM" id="CLU_095686_1_1_2"/>
<dbReference type="Proteomes" id="UP000001479">
    <property type="component" value="Chromosome"/>
</dbReference>
<dbReference type="Gene3D" id="3.30.700.20">
    <property type="entry name" value="Hypothetical protein ph0010, domain 1"/>
    <property type="match status" value="1"/>
</dbReference>
<dbReference type="Gene3D" id="3.30.1490.150">
    <property type="entry name" value="Hypothetical protein ph0010, domain 2"/>
    <property type="match status" value="1"/>
</dbReference>
<dbReference type="HAMAP" id="MF_00645">
    <property type="entry name" value="AMMECR1"/>
    <property type="match status" value="1"/>
</dbReference>
<dbReference type="InterPro" id="IPR023473">
    <property type="entry name" value="AMMECR1"/>
</dbReference>
<dbReference type="InterPro" id="IPR036071">
    <property type="entry name" value="AMMECR1_dom_sf"/>
</dbReference>
<dbReference type="InterPro" id="IPR002733">
    <property type="entry name" value="AMMECR1_domain"/>
</dbReference>
<dbReference type="InterPro" id="IPR027485">
    <property type="entry name" value="AMMECR1_N"/>
</dbReference>
<dbReference type="InterPro" id="IPR027623">
    <property type="entry name" value="AmmeMemoSam_A"/>
</dbReference>
<dbReference type="InterPro" id="IPR023472">
    <property type="entry name" value="Uncharacterised_MJ0810"/>
</dbReference>
<dbReference type="NCBIfam" id="TIGR04335">
    <property type="entry name" value="AmmeMemoSam_A"/>
    <property type="match status" value="1"/>
</dbReference>
<dbReference type="NCBIfam" id="TIGR00296">
    <property type="entry name" value="TIGR00296 family protein"/>
    <property type="match status" value="1"/>
</dbReference>
<dbReference type="PANTHER" id="PTHR13016:SF0">
    <property type="entry name" value="AMME SYNDROME CANDIDATE GENE 1 PROTEIN"/>
    <property type="match status" value="1"/>
</dbReference>
<dbReference type="PANTHER" id="PTHR13016">
    <property type="entry name" value="AMMECR1 HOMOLOG"/>
    <property type="match status" value="1"/>
</dbReference>
<dbReference type="Pfam" id="PF01871">
    <property type="entry name" value="AMMECR1"/>
    <property type="match status" value="1"/>
</dbReference>
<dbReference type="SUPFAM" id="SSF143447">
    <property type="entry name" value="AMMECR1-like"/>
    <property type="match status" value="1"/>
</dbReference>
<dbReference type="PROSITE" id="PS51112">
    <property type="entry name" value="AMMECR1"/>
    <property type="match status" value="1"/>
</dbReference>
<name>Y1949_SACI6</name>
<reference key="1">
    <citation type="journal article" date="2009" name="Proc. Natl. Acad. Sci. U.S.A.">
        <title>Biogeography of the Sulfolobus islandicus pan-genome.</title>
        <authorList>
            <person name="Reno M.L."/>
            <person name="Held N.L."/>
            <person name="Fields C.J."/>
            <person name="Burke P.V."/>
            <person name="Whitaker R.J."/>
        </authorList>
    </citation>
    <scope>NUCLEOTIDE SEQUENCE [LARGE SCALE GENOMIC DNA]</scope>
    <source>
        <strain>M.16.4 / Kamchatka #3</strain>
    </source>
</reference>
<proteinExistence type="inferred from homology"/>
<accession>C4KIY8</accession>
<gene>
    <name type="ordered locus">M164_1949</name>
</gene>
<sequence>MIQGDLVQIQELNNEIGRFLIEIARKAIKEEFKLDKLDLSNYNNPILDKKGLAFVTLEKITYNTSSLRGCIGYVEAVAPLKQIVASAAKAAAFSDPRFNPLQKDELSEIIIEVTVLTKPEEIKVKDRWDLPKIIKVGEDGLIVEKGILHSGLLLPQVPMEYCWDEETFLAETCIKASLEPDCWLDNSVRIKRFHGIIFRETRPDGSDIIVVKPSDIKCKLNELLNNF</sequence>
<protein>
    <recommendedName>
        <fullName evidence="1">Protein M164_1949</fullName>
    </recommendedName>
</protein>